<organism>
    <name type="scientific">Aedes aegypti</name>
    <name type="common">Yellowfever mosquito</name>
    <name type="synonym">Culex aegypti</name>
    <dbReference type="NCBI Taxonomy" id="7159"/>
    <lineage>
        <taxon>Eukaryota</taxon>
        <taxon>Metazoa</taxon>
        <taxon>Ecdysozoa</taxon>
        <taxon>Arthropoda</taxon>
        <taxon>Hexapoda</taxon>
        <taxon>Insecta</taxon>
        <taxon>Pterygota</taxon>
        <taxon>Neoptera</taxon>
        <taxon>Endopterygota</taxon>
        <taxon>Diptera</taxon>
        <taxon>Nematocera</taxon>
        <taxon>Culicoidea</taxon>
        <taxon>Culicidae</taxon>
        <taxon>Culicinae</taxon>
        <taxon>Aedini</taxon>
        <taxon>Aedes</taxon>
        <taxon>Stegomyia</taxon>
    </lineage>
</organism>
<name>NCBP1_AEDAE</name>
<protein>
    <recommendedName>
        <fullName>Nuclear cap-binding protein subunit 1</fullName>
    </recommendedName>
    <alternativeName>
        <fullName>80 kDa nuclear cap-binding protein</fullName>
        <shortName>CBP80</shortName>
        <shortName>NCBP 80 kDa subunit</shortName>
    </alternativeName>
</protein>
<proteinExistence type="inferred from homology"/>
<accession>Q16UN6</accession>
<reference key="1">
    <citation type="journal article" date="2007" name="Science">
        <title>Genome sequence of Aedes aegypti, a major arbovirus vector.</title>
        <authorList>
            <person name="Nene V."/>
            <person name="Wortman J.R."/>
            <person name="Lawson D."/>
            <person name="Haas B.J."/>
            <person name="Kodira C.D."/>
            <person name="Tu Z.J."/>
            <person name="Loftus B.J."/>
            <person name="Xi Z."/>
            <person name="Megy K."/>
            <person name="Grabherr M."/>
            <person name="Ren Q."/>
            <person name="Zdobnov E.M."/>
            <person name="Lobo N.F."/>
            <person name="Campbell K.S."/>
            <person name="Brown S.E."/>
            <person name="Bonaldo M.F."/>
            <person name="Zhu J."/>
            <person name="Sinkins S.P."/>
            <person name="Hogenkamp D.G."/>
            <person name="Amedeo P."/>
            <person name="Arensburger P."/>
            <person name="Atkinson P.W."/>
            <person name="Bidwell S.L."/>
            <person name="Biedler J."/>
            <person name="Birney E."/>
            <person name="Bruggner R.V."/>
            <person name="Costas J."/>
            <person name="Coy M.R."/>
            <person name="Crabtree J."/>
            <person name="Crawford M."/>
            <person name="DeBruyn B."/>
            <person name="DeCaprio D."/>
            <person name="Eiglmeier K."/>
            <person name="Eisenstadt E."/>
            <person name="El-Dorry H."/>
            <person name="Gelbart W.M."/>
            <person name="Gomes S.L."/>
            <person name="Hammond M."/>
            <person name="Hannick L.I."/>
            <person name="Hogan J.R."/>
            <person name="Holmes M.H."/>
            <person name="Jaffe D."/>
            <person name="Johnston S.J."/>
            <person name="Kennedy R.C."/>
            <person name="Koo H."/>
            <person name="Kravitz S."/>
            <person name="Kriventseva E.V."/>
            <person name="Kulp D."/>
            <person name="Labutti K."/>
            <person name="Lee E."/>
            <person name="Li S."/>
            <person name="Lovin D.D."/>
            <person name="Mao C."/>
            <person name="Mauceli E."/>
            <person name="Menck C.F."/>
            <person name="Miller J.R."/>
            <person name="Montgomery P."/>
            <person name="Mori A."/>
            <person name="Nascimento A.L."/>
            <person name="Naveira H.F."/>
            <person name="Nusbaum C."/>
            <person name="O'Leary S.B."/>
            <person name="Orvis J."/>
            <person name="Pertea M."/>
            <person name="Quesneville H."/>
            <person name="Reidenbach K.R."/>
            <person name="Rogers Y.-H.C."/>
            <person name="Roth C.W."/>
            <person name="Schneider J.R."/>
            <person name="Schatz M."/>
            <person name="Shumway M."/>
            <person name="Stanke M."/>
            <person name="Stinson E.O."/>
            <person name="Tubio J.M.C."/>
            <person name="Vanzee J.P."/>
            <person name="Verjovski-Almeida S."/>
            <person name="Werner D."/>
            <person name="White O.R."/>
            <person name="Wyder S."/>
            <person name="Zeng Q."/>
            <person name="Zhao Q."/>
            <person name="Zhao Y."/>
            <person name="Hill C.A."/>
            <person name="Raikhel A.S."/>
            <person name="Soares M.B."/>
            <person name="Knudson D.L."/>
            <person name="Lee N.H."/>
            <person name="Galagan J."/>
            <person name="Salzberg S.L."/>
            <person name="Paulsen I.T."/>
            <person name="Dimopoulos G."/>
            <person name="Collins F.H."/>
            <person name="Bruce B."/>
            <person name="Fraser-Liggett C.M."/>
            <person name="Severson D.W."/>
        </authorList>
    </citation>
    <scope>NUCLEOTIDE SEQUENCE [LARGE SCALE GENOMIC DNA]</scope>
    <source>
        <strain>LVPib12</strain>
    </source>
</reference>
<gene>
    <name type="primary">Cbp80</name>
    <name type="ORF">AAEL009839</name>
</gene>
<evidence type="ECO:0000250" key="1"/>
<evidence type="ECO:0000256" key="2">
    <source>
        <dbReference type="SAM" id="MobiDB-lite"/>
    </source>
</evidence>
<evidence type="ECO:0000305" key="3"/>
<sequence length="813" mass="95126">MNRRRAYEDDGDFYGERSRKRRRVSENQEMEERLETLILRVGENSSSSLESNLEGLVSVLESDLGNFRSKILRILSECPIKMPEKCTIYSTMVGLMNAKNYNFGGEFVDHMVKTFKESLKQCRWDAARYALRFLSDLVNCHVISTNSLLQLLDNMVDAANEDSVPQVRRDWYVFAVLSTLPWVGRELYEKKESALENLLVRIEVFLNKRTKKHHNSLRVWSVDAPHPQEEYLDCLWAQIRKLRQDNWAEKHIPRPYLAFDSVLCEALQHNLPLIHPPPHQDSFEYPMPWVVYRMFDYTDCPAGPILPGAHSIERFLIEEHLHSIIEAHHWERKDCAANLLNLSYKDKIPLEYCIVEVIFAELFKMPTPRYLDICYGSILIELCKLQPSKMPQVLAQATEILFMRIDSMNTSCFDRFANWFSYHLSNFQFRWSWDDWDSCLLLEPEHPRPKFIEEVLLKCLRLSYHDRFKEMMPETYSKLIPKPPMPTYKYTMEGAASLPGTATAHKLVVAIRQKCTPEDVLNELKDLPNPRETSENDMVESTFNPLKIDVFVQTLLNLGSKSFSHTFAAISKFHLVFKTLAETEEAQICILHNVFELWVNHQQMMVVIIDKLLKTQIVECSAVATWVFSKEMVGEFTKMYLWEILHLTIKKMNQHVTKLSKELSDAKERLDRNAESSSSESEEETAPAGTDAVTPQRRRKKPIGDNADKPTEEQVERMEEKLEAAYVDQKRLFLIIFQRFIMILSEHLVKCDTDGRDYDTDWYRWTVGRLQQVFMMHHEQVKKYSSTLESLLFTSDIDPHILDVFHQFTALRS</sequence>
<feature type="chain" id="PRO_0000385230" description="Nuclear cap-binding protein subunit 1">
    <location>
        <begin position="1"/>
        <end position="813"/>
    </location>
</feature>
<feature type="domain" description="MIF4G">
    <location>
        <begin position="31"/>
        <end position="243"/>
    </location>
</feature>
<feature type="region of interest" description="Disordered" evidence="2">
    <location>
        <begin position="667"/>
        <end position="716"/>
    </location>
</feature>
<feature type="compositionally biased region" description="Basic and acidic residues" evidence="2">
    <location>
        <begin position="702"/>
        <end position="716"/>
    </location>
</feature>
<comment type="function">
    <text evidence="1">Component of the cap-binding complex (CBC), which binds cotranscriptionally to the 5'-cap of pre-mRNAs and is involved in various processes such as pre-mRNA splicing and RNA-mediated gene silencing (RNAi). The CBC complex is involved in miRNA-mediated RNA interference and is required for primary microRNAs (miRNAs) processing. Also involved in innate immunity via the short interfering RNAs (siRNAs) processing machinery by restricting the viral RNA production. In the CBC complex, Cbp80 does not bind directly capped RNAs (m7GpppG-capped RNA) but is required to stabilize the movement of the N-terminal loop of Cbp20 and lock the CBC into a high affinity cap-binding state with the cap structure (By similarity).</text>
</comment>
<comment type="subunit">
    <text evidence="1">Component of the nuclear cap-binding complex (CBC), a heterodimer composed of Cbp80 and Cbp20 that interacts with m7GpppG-capped RNA.</text>
</comment>
<comment type="subcellular location">
    <subcellularLocation>
        <location evidence="1">Nucleus</location>
    </subcellularLocation>
</comment>
<comment type="similarity">
    <text evidence="3">Belongs to the NCBP1 family.</text>
</comment>
<dbReference type="EMBL" id="CH477617">
    <property type="protein sequence ID" value="EAT38244.1"/>
    <property type="molecule type" value="Genomic_DNA"/>
</dbReference>
<dbReference type="SMR" id="Q16UN6"/>
<dbReference type="FunCoup" id="Q16UN6">
    <property type="interactions" value="2524"/>
</dbReference>
<dbReference type="STRING" id="7159.Q16UN6"/>
<dbReference type="PaxDb" id="7159-AAEL009839-PA"/>
<dbReference type="EnsemblMetazoa" id="AAEL009839-RA">
    <property type="protein sequence ID" value="AAEL009839-PA"/>
    <property type="gene ID" value="AAEL009839"/>
</dbReference>
<dbReference type="GeneID" id="5572517"/>
<dbReference type="KEGG" id="aag:5572517"/>
<dbReference type="CTD" id="44409"/>
<dbReference type="VEuPathDB" id="VectorBase:AAEL009839"/>
<dbReference type="eggNOG" id="KOG1104">
    <property type="taxonomic scope" value="Eukaryota"/>
</dbReference>
<dbReference type="HOGENOM" id="CLU_013207_0_0_1"/>
<dbReference type="InParanoid" id="Q16UN6"/>
<dbReference type="OMA" id="CAAEGLM"/>
<dbReference type="OrthoDB" id="10252707at2759"/>
<dbReference type="PhylomeDB" id="Q16UN6"/>
<dbReference type="Proteomes" id="UP000008820">
    <property type="component" value="Chromosome 3"/>
</dbReference>
<dbReference type="Proteomes" id="UP000682892">
    <property type="component" value="Unassembled WGS sequence"/>
</dbReference>
<dbReference type="GO" id="GO:0005846">
    <property type="term" value="C:nuclear cap binding complex"/>
    <property type="evidence" value="ECO:0007669"/>
    <property type="project" value="InterPro"/>
</dbReference>
<dbReference type="GO" id="GO:0005634">
    <property type="term" value="C:nucleus"/>
    <property type="evidence" value="ECO:0007669"/>
    <property type="project" value="UniProtKB-SubCell"/>
</dbReference>
<dbReference type="GO" id="GO:0003729">
    <property type="term" value="F:mRNA binding"/>
    <property type="evidence" value="ECO:0007669"/>
    <property type="project" value="TreeGrafter"/>
</dbReference>
<dbReference type="GO" id="GO:0000339">
    <property type="term" value="F:RNA cap binding"/>
    <property type="evidence" value="ECO:0007669"/>
    <property type="project" value="InterPro"/>
</dbReference>
<dbReference type="GO" id="GO:0006370">
    <property type="term" value="P:7-methylguanosine mRNA capping"/>
    <property type="evidence" value="ECO:0007669"/>
    <property type="project" value="UniProtKB-KW"/>
</dbReference>
<dbReference type="GO" id="GO:0006406">
    <property type="term" value="P:mRNA export from nucleus"/>
    <property type="evidence" value="ECO:0007669"/>
    <property type="project" value="InterPro"/>
</dbReference>
<dbReference type="GO" id="GO:0000184">
    <property type="term" value="P:nuclear-transcribed mRNA catabolic process, nonsense-mediated decay"/>
    <property type="evidence" value="ECO:0007669"/>
    <property type="project" value="TreeGrafter"/>
</dbReference>
<dbReference type="GO" id="GO:0031047">
    <property type="term" value="P:regulatory ncRNA-mediated gene silencing"/>
    <property type="evidence" value="ECO:0007669"/>
    <property type="project" value="UniProtKB-KW"/>
</dbReference>
<dbReference type="GO" id="GO:0008380">
    <property type="term" value="P:RNA splicing"/>
    <property type="evidence" value="ECO:0007669"/>
    <property type="project" value="UniProtKB-KW"/>
</dbReference>
<dbReference type="FunFam" id="1.25.40.180:FF:000010">
    <property type="entry name" value="Nuclear cap-binding protein subunit 1"/>
    <property type="match status" value="1"/>
</dbReference>
<dbReference type="FunFam" id="1.25.40.180:FF:000041">
    <property type="entry name" value="Nuclear cap-binding protein subunit 1"/>
    <property type="match status" value="1"/>
</dbReference>
<dbReference type="Gene3D" id="1.25.40.180">
    <property type="match status" value="3"/>
</dbReference>
<dbReference type="InterPro" id="IPR016024">
    <property type="entry name" value="ARM-type_fold"/>
</dbReference>
<dbReference type="InterPro" id="IPR027159">
    <property type="entry name" value="CBP80"/>
</dbReference>
<dbReference type="InterPro" id="IPR015172">
    <property type="entry name" value="MIF4G-like_typ-1"/>
</dbReference>
<dbReference type="InterPro" id="IPR015174">
    <property type="entry name" value="MIF4G-like_typ-2"/>
</dbReference>
<dbReference type="InterPro" id="IPR003890">
    <property type="entry name" value="MIF4G-like_typ-3"/>
</dbReference>
<dbReference type="PANTHER" id="PTHR12412">
    <property type="entry name" value="CAP BINDING PROTEIN"/>
    <property type="match status" value="1"/>
</dbReference>
<dbReference type="PANTHER" id="PTHR12412:SF2">
    <property type="entry name" value="NUCLEAR CAP-BINDING PROTEIN SUBUNIT 1"/>
    <property type="match status" value="1"/>
</dbReference>
<dbReference type="Pfam" id="PF02854">
    <property type="entry name" value="MIF4G"/>
    <property type="match status" value="1"/>
</dbReference>
<dbReference type="Pfam" id="PF09088">
    <property type="entry name" value="MIF4G_like"/>
    <property type="match status" value="1"/>
</dbReference>
<dbReference type="Pfam" id="PF09090">
    <property type="entry name" value="MIF4G_like_2"/>
    <property type="match status" value="1"/>
</dbReference>
<dbReference type="SMART" id="SM00543">
    <property type="entry name" value="MIF4G"/>
    <property type="match status" value="1"/>
</dbReference>
<dbReference type="SUPFAM" id="SSF48371">
    <property type="entry name" value="ARM repeat"/>
    <property type="match status" value="3"/>
</dbReference>
<keyword id="KW-0506">mRNA capping</keyword>
<keyword id="KW-0507">mRNA processing</keyword>
<keyword id="KW-0508">mRNA splicing</keyword>
<keyword id="KW-0539">Nucleus</keyword>
<keyword id="KW-1185">Reference proteome</keyword>
<keyword id="KW-0943">RNA-mediated gene silencing</keyword>